<organism>
    <name type="scientific">Staphylococcus epidermidis (strain ATCC 35984 / DSM 28319 / BCRC 17069 / CCUG 31568 / BM 3577 / RP62A)</name>
    <dbReference type="NCBI Taxonomy" id="176279"/>
    <lineage>
        <taxon>Bacteria</taxon>
        <taxon>Bacillati</taxon>
        <taxon>Bacillota</taxon>
        <taxon>Bacilli</taxon>
        <taxon>Bacillales</taxon>
        <taxon>Staphylococcaceae</taxon>
        <taxon>Staphylococcus</taxon>
    </lineage>
</organism>
<proteinExistence type="inferred from homology"/>
<dbReference type="EMBL" id="CP000029">
    <property type="protein sequence ID" value="AAW53891.1"/>
    <property type="molecule type" value="Genomic_DNA"/>
</dbReference>
<dbReference type="RefSeq" id="WP_001829588.1">
    <property type="nucleotide sequence ID" value="NC_002976.3"/>
</dbReference>
<dbReference type="SMR" id="Q5HQU5"/>
<dbReference type="STRING" id="176279.SERP0451"/>
<dbReference type="GeneID" id="50019286"/>
<dbReference type="KEGG" id="ser:SERP0451"/>
<dbReference type="eggNOG" id="COG0691">
    <property type="taxonomic scope" value="Bacteria"/>
</dbReference>
<dbReference type="HOGENOM" id="CLU_108953_0_0_9"/>
<dbReference type="Proteomes" id="UP000000531">
    <property type="component" value="Chromosome"/>
</dbReference>
<dbReference type="GO" id="GO:0005829">
    <property type="term" value="C:cytosol"/>
    <property type="evidence" value="ECO:0007669"/>
    <property type="project" value="TreeGrafter"/>
</dbReference>
<dbReference type="GO" id="GO:0003723">
    <property type="term" value="F:RNA binding"/>
    <property type="evidence" value="ECO:0007669"/>
    <property type="project" value="UniProtKB-UniRule"/>
</dbReference>
<dbReference type="GO" id="GO:0070929">
    <property type="term" value="P:trans-translation"/>
    <property type="evidence" value="ECO:0007669"/>
    <property type="project" value="UniProtKB-UniRule"/>
</dbReference>
<dbReference type="CDD" id="cd09294">
    <property type="entry name" value="SmpB"/>
    <property type="match status" value="1"/>
</dbReference>
<dbReference type="Gene3D" id="2.40.280.10">
    <property type="match status" value="1"/>
</dbReference>
<dbReference type="HAMAP" id="MF_00023">
    <property type="entry name" value="SmpB"/>
    <property type="match status" value="1"/>
</dbReference>
<dbReference type="InterPro" id="IPR023620">
    <property type="entry name" value="SmpB"/>
</dbReference>
<dbReference type="InterPro" id="IPR000037">
    <property type="entry name" value="SsrA-bd_prot"/>
</dbReference>
<dbReference type="InterPro" id="IPR020081">
    <property type="entry name" value="SsrA-bd_prot_CS"/>
</dbReference>
<dbReference type="NCBIfam" id="NF003843">
    <property type="entry name" value="PRK05422.1"/>
    <property type="match status" value="1"/>
</dbReference>
<dbReference type="NCBIfam" id="TIGR00086">
    <property type="entry name" value="smpB"/>
    <property type="match status" value="1"/>
</dbReference>
<dbReference type="PANTHER" id="PTHR30308:SF2">
    <property type="entry name" value="SSRA-BINDING PROTEIN"/>
    <property type="match status" value="1"/>
</dbReference>
<dbReference type="PANTHER" id="PTHR30308">
    <property type="entry name" value="TMRNA-BINDING COMPONENT OF TRANS-TRANSLATION TAGGING COMPLEX"/>
    <property type="match status" value="1"/>
</dbReference>
<dbReference type="Pfam" id="PF01668">
    <property type="entry name" value="SmpB"/>
    <property type="match status" value="1"/>
</dbReference>
<dbReference type="SUPFAM" id="SSF74982">
    <property type="entry name" value="Small protein B (SmpB)"/>
    <property type="match status" value="1"/>
</dbReference>
<dbReference type="PROSITE" id="PS01317">
    <property type="entry name" value="SSRP"/>
    <property type="match status" value="1"/>
</dbReference>
<protein>
    <recommendedName>
        <fullName evidence="1">SsrA-binding protein</fullName>
    </recommendedName>
    <alternativeName>
        <fullName evidence="1">Small protein B</fullName>
    </alternativeName>
</protein>
<comment type="function">
    <text evidence="1">Required for rescue of stalled ribosomes mediated by trans-translation. Binds to transfer-messenger RNA (tmRNA), required for stable association of tmRNA with ribosomes. tmRNA and SmpB together mimic tRNA shape, replacing the anticodon stem-loop with SmpB. tmRNA is encoded by the ssrA gene; the 2 termini fold to resemble tRNA(Ala) and it encodes a 'tag peptide', a short internal open reading frame. During trans-translation Ala-aminoacylated tmRNA acts like a tRNA, entering the A-site of stalled ribosomes, displacing the stalled mRNA. The ribosome then switches to translate the ORF on the tmRNA; the nascent peptide is terminated with the 'tag peptide' encoded by the tmRNA and targeted for degradation. The ribosome is freed to recommence translation, which seems to be the essential function of trans-translation.</text>
</comment>
<comment type="subcellular location">
    <subcellularLocation>
        <location evidence="1">Cytoplasm</location>
    </subcellularLocation>
    <text evidence="1">The tmRNA-SmpB complex associates with stalled 70S ribosomes.</text>
</comment>
<comment type="similarity">
    <text evidence="1">Belongs to the SmpB family.</text>
</comment>
<reference key="1">
    <citation type="journal article" date="2005" name="J. Bacteriol.">
        <title>Insights on evolution of virulence and resistance from the complete genome analysis of an early methicillin-resistant Staphylococcus aureus strain and a biofilm-producing methicillin-resistant Staphylococcus epidermidis strain.</title>
        <authorList>
            <person name="Gill S.R."/>
            <person name="Fouts D.E."/>
            <person name="Archer G.L."/>
            <person name="Mongodin E.F."/>
            <person name="DeBoy R.T."/>
            <person name="Ravel J."/>
            <person name="Paulsen I.T."/>
            <person name="Kolonay J.F."/>
            <person name="Brinkac L.M."/>
            <person name="Beanan M.J."/>
            <person name="Dodson R.J."/>
            <person name="Daugherty S.C."/>
            <person name="Madupu R."/>
            <person name="Angiuoli S.V."/>
            <person name="Durkin A.S."/>
            <person name="Haft D.H."/>
            <person name="Vamathevan J.J."/>
            <person name="Khouri H."/>
            <person name="Utterback T.R."/>
            <person name="Lee C."/>
            <person name="Dimitrov G."/>
            <person name="Jiang L."/>
            <person name="Qin H."/>
            <person name="Weidman J."/>
            <person name="Tran K."/>
            <person name="Kang K.H."/>
            <person name="Hance I.R."/>
            <person name="Nelson K.E."/>
            <person name="Fraser C.M."/>
        </authorList>
    </citation>
    <scope>NUCLEOTIDE SEQUENCE [LARGE SCALE GENOMIC DNA]</scope>
    <source>
        <strain>ATCC 35984 / DSM 28319 / BCRC 17069 / CCUG 31568 / BM 3577 / RP62A</strain>
    </source>
</reference>
<keyword id="KW-0963">Cytoplasm</keyword>
<keyword id="KW-1185">Reference proteome</keyword>
<keyword id="KW-0694">RNA-binding</keyword>
<accession>Q5HQU5</accession>
<name>SSRP_STAEQ</name>
<evidence type="ECO:0000255" key="1">
    <source>
        <dbReference type="HAMAP-Rule" id="MF_00023"/>
    </source>
</evidence>
<gene>
    <name evidence="1" type="primary">smpB</name>
    <name type="ordered locus">SERP0451</name>
</gene>
<feature type="chain" id="PRO_0000103035" description="SsrA-binding protein">
    <location>
        <begin position="1"/>
        <end position="156"/>
    </location>
</feature>
<sequence length="156" mass="18055">MAKKKSKSPGTLAENRKARHDYNIEDTIEAGIALRGTEIKSIRRGSANLKDSFAQVRRGEMYLNNMHIAPYEEGNRFNHDPLRTRKLLLHKKEIQKLGERTREIGYSIIPLKLYLKHGQCKVLLGVARGKKKYDKRQALKEKAVKRDIDRAVKARY</sequence>